<accession>Q9RN26</accession>
<protein>
    <recommendedName>
        <fullName>Uncharacterized protein pXO2-06/BXB0005/GBAA_pXO2_0005</fullName>
    </recommendedName>
</protein>
<keyword id="KW-0614">Plasmid</keyword>
<keyword id="KW-1185">Reference proteome</keyword>
<gene>
    <name type="ordered locus">pXO2-06</name>
    <name type="ordered locus">BXB0005</name>
    <name type="ordered locus">GBAA_pXO2_0005</name>
</gene>
<reference key="1">
    <citation type="journal article" date="1999" name="J. Appl. Microbiol.">
        <title>Sequence, assembly and analysis of pXO1 and pXO2.</title>
        <authorList>
            <person name="Okinaka R.T."/>
            <person name="Cloud K."/>
            <person name="Hampton O."/>
            <person name="Hoffmaster A."/>
            <person name="Hill K.K."/>
            <person name="Keim P."/>
            <person name="Koehler T."/>
            <person name="Lamke G."/>
            <person name="Kumano S."/>
            <person name="Manter D."/>
            <person name="Martinez Y."/>
            <person name="Ricke D."/>
            <person name="Svensson R."/>
            <person name="Jackson P.J."/>
        </authorList>
    </citation>
    <scope>NUCLEOTIDE SEQUENCE [GENOMIC DNA]</scope>
    <source>
        <strain>Pasteur</strain>
    </source>
</reference>
<reference key="2">
    <citation type="journal article" date="2002" name="Science">
        <title>Comparative genome sequencing for discovery of novel polymorphisms in Bacillus anthracis.</title>
        <authorList>
            <person name="Read T.D."/>
            <person name="Salzberg S.L."/>
            <person name="Pop M."/>
            <person name="Shumway M.F."/>
            <person name="Umayam L."/>
            <person name="Jiang L."/>
            <person name="Holtzapple E."/>
            <person name="Busch J.D."/>
            <person name="Smith K.L."/>
            <person name="Schupp J.M."/>
            <person name="Solomon D."/>
            <person name="Keim P."/>
            <person name="Fraser C.M."/>
        </authorList>
    </citation>
    <scope>NUCLEOTIDE SEQUENCE [GENOMIC DNA]</scope>
    <source>
        <strain>Ames / isolate Florida / A2012</strain>
    </source>
</reference>
<reference key="3">
    <citation type="journal article" date="2009" name="J. Bacteriol.">
        <title>The complete genome sequence of Bacillus anthracis Ames 'Ancestor'.</title>
        <authorList>
            <person name="Ravel J."/>
            <person name="Jiang L."/>
            <person name="Stanley S.T."/>
            <person name="Wilson M.R."/>
            <person name="Decker R.S."/>
            <person name="Read T.D."/>
            <person name="Worsham P."/>
            <person name="Keim P.S."/>
            <person name="Salzberg S.L."/>
            <person name="Fraser-Liggett C.M."/>
            <person name="Rasko D.A."/>
        </authorList>
    </citation>
    <scope>NUCLEOTIDE SEQUENCE [LARGE SCALE GENOMIC DNA]</scope>
    <source>
        <strain>Ames ancestor</strain>
    </source>
</reference>
<proteinExistence type="predicted"/>
<name>Y6505_BACAN</name>
<organism>
    <name type="scientific">Bacillus anthracis</name>
    <dbReference type="NCBI Taxonomy" id="1392"/>
    <lineage>
        <taxon>Bacteria</taxon>
        <taxon>Bacillati</taxon>
        <taxon>Bacillota</taxon>
        <taxon>Bacilli</taxon>
        <taxon>Bacillales</taxon>
        <taxon>Bacillaceae</taxon>
        <taxon>Bacillus</taxon>
        <taxon>Bacillus cereus group</taxon>
    </lineage>
</organism>
<sequence>MLLSELKPNHDYAKEGKYLILSLRKKKGVRKDKFIEIPITWFDYNFGEKVEWLIVREYQPSVNGKEKYTNCKLENIHAQVSVVNVKGERMK</sequence>
<geneLocation type="plasmid">
    <name>pXO2</name>
</geneLocation>
<dbReference type="EMBL" id="AF188935">
    <property type="protein sequence ID" value="AAF13611.1"/>
    <property type="molecule type" value="Genomic_DNA"/>
</dbReference>
<dbReference type="EMBL" id="AE011191">
    <property type="protein sequence ID" value="AAM26166.1"/>
    <property type="molecule type" value="Genomic_DNA"/>
</dbReference>
<dbReference type="EMBL" id="AE017335">
    <property type="protein sequence ID" value="AAT28935.2"/>
    <property type="molecule type" value="Genomic_DNA"/>
</dbReference>
<dbReference type="RefSeq" id="NP_053161.1">
    <property type="nucleotide sequence ID" value="NC_002146.1"/>
</dbReference>
<dbReference type="RefSeq" id="WP_000926954.1">
    <property type="nucleotide sequence ID" value="NZ_VTZL01000009.1"/>
</dbReference>
<dbReference type="GeneID" id="45025320"/>
<dbReference type="KEGG" id="banh:HYU01_29025"/>
<dbReference type="KEGG" id="bar:GBAA_pXO2_0005"/>
<dbReference type="HOGENOM" id="CLU_2407163_0_0_9"/>
<dbReference type="OMA" id="WLIVREC"/>
<dbReference type="Proteomes" id="UP000000594">
    <property type="component" value="Plasmid pXO2"/>
</dbReference>
<dbReference type="InterPro" id="IPR020265">
    <property type="entry name" value="DUF5513"/>
</dbReference>
<dbReference type="Pfam" id="PF17632">
    <property type="entry name" value="DUF5513"/>
    <property type="match status" value="1"/>
</dbReference>
<feature type="chain" id="PRO_0000216828" description="Uncharacterized protein pXO2-06/BXB0005/GBAA_pXO2_0005">
    <location>
        <begin position="1"/>
        <end position="91"/>
    </location>
</feature>